<accession>A1QYY3</accession>
<keyword id="KW-1185">Reference proteome</keyword>
<keyword id="KW-0687">Ribonucleoprotein</keyword>
<keyword id="KW-0689">Ribosomal protein</keyword>
<keyword id="KW-0694">RNA-binding</keyword>
<keyword id="KW-0699">rRNA-binding</keyword>
<gene>
    <name evidence="1" type="primary">rplT</name>
    <name type="ordered locus">BT0188</name>
</gene>
<name>RL20_BORT9</name>
<evidence type="ECO:0000255" key="1">
    <source>
        <dbReference type="HAMAP-Rule" id="MF_00382"/>
    </source>
</evidence>
<evidence type="ECO:0000305" key="2"/>
<feature type="chain" id="PRO_1000193940" description="Large ribosomal subunit protein bL20">
    <location>
        <begin position="1"/>
        <end position="115"/>
    </location>
</feature>
<protein>
    <recommendedName>
        <fullName evidence="1">Large ribosomal subunit protein bL20</fullName>
    </recommendedName>
    <alternativeName>
        <fullName evidence="2">50S ribosomal protein L20</fullName>
    </alternativeName>
</protein>
<sequence length="115" mass="13557">MARVKNGIVHVARRKKILKKTKGFWGTKKSNYKKAKDTLRKGMMYATRDRKTRKRDFRSLWIVRISAALTGMGINYSKFFESLKKSNIKLNRKILSNLAIEDIETFKKIVYEIKN</sequence>
<dbReference type="EMBL" id="CP000049">
    <property type="protein sequence ID" value="AAX17525.1"/>
    <property type="molecule type" value="Genomic_DNA"/>
</dbReference>
<dbReference type="RefSeq" id="WP_011772144.1">
    <property type="nucleotide sequence ID" value="NZ_CP073176.1"/>
</dbReference>
<dbReference type="SMR" id="A1QYY3"/>
<dbReference type="KEGG" id="btu:BT0188"/>
<dbReference type="eggNOG" id="COG0292">
    <property type="taxonomic scope" value="Bacteria"/>
</dbReference>
<dbReference type="HOGENOM" id="CLU_123265_0_1_12"/>
<dbReference type="Proteomes" id="UP000001205">
    <property type="component" value="Chromosome"/>
</dbReference>
<dbReference type="GO" id="GO:1990904">
    <property type="term" value="C:ribonucleoprotein complex"/>
    <property type="evidence" value="ECO:0007669"/>
    <property type="project" value="UniProtKB-KW"/>
</dbReference>
<dbReference type="GO" id="GO:0005840">
    <property type="term" value="C:ribosome"/>
    <property type="evidence" value="ECO:0007669"/>
    <property type="project" value="UniProtKB-KW"/>
</dbReference>
<dbReference type="GO" id="GO:0019843">
    <property type="term" value="F:rRNA binding"/>
    <property type="evidence" value="ECO:0007669"/>
    <property type="project" value="UniProtKB-UniRule"/>
</dbReference>
<dbReference type="GO" id="GO:0003735">
    <property type="term" value="F:structural constituent of ribosome"/>
    <property type="evidence" value="ECO:0007669"/>
    <property type="project" value="InterPro"/>
</dbReference>
<dbReference type="GO" id="GO:0000027">
    <property type="term" value="P:ribosomal large subunit assembly"/>
    <property type="evidence" value="ECO:0007669"/>
    <property type="project" value="UniProtKB-UniRule"/>
</dbReference>
<dbReference type="GO" id="GO:0006412">
    <property type="term" value="P:translation"/>
    <property type="evidence" value="ECO:0007669"/>
    <property type="project" value="InterPro"/>
</dbReference>
<dbReference type="CDD" id="cd07026">
    <property type="entry name" value="Ribosomal_L20"/>
    <property type="match status" value="1"/>
</dbReference>
<dbReference type="FunFam" id="1.10.1900.20:FF:000001">
    <property type="entry name" value="50S ribosomal protein L20"/>
    <property type="match status" value="1"/>
</dbReference>
<dbReference type="Gene3D" id="6.10.160.10">
    <property type="match status" value="1"/>
</dbReference>
<dbReference type="Gene3D" id="1.10.1900.20">
    <property type="entry name" value="Ribosomal protein L20"/>
    <property type="match status" value="1"/>
</dbReference>
<dbReference type="HAMAP" id="MF_00382">
    <property type="entry name" value="Ribosomal_bL20"/>
    <property type="match status" value="1"/>
</dbReference>
<dbReference type="InterPro" id="IPR005813">
    <property type="entry name" value="Ribosomal_bL20"/>
</dbReference>
<dbReference type="InterPro" id="IPR035566">
    <property type="entry name" value="Ribosomal_protein_bL20_C"/>
</dbReference>
<dbReference type="NCBIfam" id="TIGR01032">
    <property type="entry name" value="rplT_bact"/>
    <property type="match status" value="1"/>
</dbReference>
<dbReference type="PANTHER" id="PTHR10986">
    <property type="entry name" value="39S RIBOSOMAL PROTEIN L20"/>
    <property type="match status" value="1"/>
</dbReference>
<dbReference type="Pfam" id="PF00453">
    <property type="entry name" value="Ribosomal_L20"/>
    <property type="match status" value="1"/>
</dbReference>
<dbReference type="PRINTS" id="PR00062">
    <property type="entry name" value="RIBOSOMALL20"/>
</dbReference>
<dbReference type="SUPFAM" id="SSF74731">
    <property type="entry name" value="Ribosomal protein L20"/>
    <property type="match status" value="1"/>
</dbReference>
<reference key="1">
    <citation type="submission" date="2004-12" db="EMBL/GenBank/DDBJ databases">
        <title>The genome sequence of Borrelia hermsii and Borrelia turicatae: comparative analysis of two agents of endemic N. America relapsing fever.</title>
        <authorList>
            <person name="Porcella S.F."/>
            <person name="Raffel S.J."/>
            <person name="Schrumpf M.E."/>
            <person name="Montgomery B."/>
            <person name="Smith T."/>
            <person name="Schwan T.G."/>
        </authorList>
    </citation>
    <scope>NUCLEOTIDE SEQUENCE [LARGE SCALE GENOMIC DNA]</scope>
    <source>
        <strain>91E135</strain>
    </source>
</reference>
<organism>
    <name type="scientific">Borrelia turicatae (strain 91E135)</name>
    <dbReference type="NCBI Taxonomy" id="314724"/>
    <lineage>
        <taxon>Bacteria</taxon>
        <taxon>Pseudomonadati</taxon>
        <taxon>Spirochaetota</taxon>
        <taxon>Spirochaetia</taxon>
        <taxon>Spirochaetales</taxon>
        <taxon>Borreliaceae</taxon>
        <taxon>Borrelia</taxon>
    </lineage>
</organism>
<proteinExistence type="inferred from homology"/>
<comment type="function">
    <text evidence="1">Binds directly to 23S ribosomal RNA and is necessary for the in vitro assembly process of the 50S ribosomal subunit. It is not involved in the protein synthesizing functions of that subunit.</text>
</comment>
<comment type="similarity">
    <text evidence="1">Belongs to the bacterial ribosomal protein bL20 family.</text>
</comment>